<dbReference type="EMBL" id="CP000668">
    <property type="protein sequence ID" value="ABP42242.1"/>
    <property type="molecule type" value="Genomic_DNA"/>
</dbReference>
<dbReference type="RefSeq" id="WP_002212255.1">
    <property type="nucleotide sequence ID" value="NZ_CP009715.1"/>
</dbReference>
<dbReference type="SMR" id="A4TSI0"/>
<dbReference type="GeneID" id="57974590"/>
<dbReference type="KEGG" id="ypp:YPDSF_3901"/>
<dbReference type="PATRIC" id="fig|386656.14.peg.616"/>
<dbReference type="GO" id="GO:0005829">
    <property type="term" value="C:cytosol"/>
    <property type="evidence" value="ECO:0007669"/>
    <property type="project" value="TreeGrafter"/>
</dbReference>
<dbReference type="CDD" id="cd01462">
    <property type="entry name" value="VWA_YIEM_type"/>
    <property type="match status" value="1"/>
</dbReference>
<dbReference type="Gene3D" id="3.40.50.410">
    <property type="entry name" value="von Willebrand factor, type A domain"/>
    <property type="match status" value="1"/>
</dbReference>
<dbReference type="HAMAP" id="MF_01626">
    <property type="entry name" value="ViaA"/>
    <property type="match status" value="1"/>
</dbReference>
<dbReference type="InterPro" id="IPR008912">
    <property type="entry name" value="Uncharacterised_CoxE"/>
</dbReference>
<dbReference type="InterPro" id="IPR023481">
    <property type="entry name" value="Uncharacterised_ViaA"/>
</dbReference>
<dbReference type="InterPro" id="IPR002035">
    <property type="entry name" value="VWF_A"/>
</dbReference>
<dbReference type="InterPro" id="IPR036465">
    <property type="entry name" value="vWFA_dom_sf"/>
</dbReference>
<dbReference type="NCBIfam" id="NF008230">
    <property type="entry name" value="PRK10997.1"/>
    <property type="match status" value="1"/>
</dbReference>
<dbReference type="PANTHER" id="PTHR36846">
    <property type="entry name" value="PROTEIN VIAA"/>
    <property type="match status" value="1"/>
</dbReference>
<dbReference type="PANTHER" id="PTHR36846:SF1">
    <property type="entry name" value="PROTEIN VIAA"/>
    <property type="match status" value="1"/>
</dbReference>
<dbReference type="Pfam" id="PF05762">
    <property type="entry name" value="VWA_CoxE"/>
    <property type="match status" value="1"/>
</dbReference>
<dbReference type="SMART" id="SM00327">
    <property type="entry name" value="VWA"/>
    <property type="match status" value="1"/>
</dbReference>
<dbReference type="SUPFAM" id="SSF53300">
    <property type="entry name" value="vWA-like"/>
    <property type="match status" value="1"/>
</dbReference>
<sequence>MLSLATLDMLLSISEGELIEEMVVGLLAAPQLAIFFEKFPRIKRALMKDIPGWKQNLQQRIREASVPPGLANEFSLYQQSLLEDSPQFYAHLPDIVAQLQDLHSPFATQAKTLVQTADLAKNPPGGDSLQTLFLQRWRVSLILQTITIHHQLLEQEREQLLAELQRRLALSGALEPILTTNDNAAGRLWDMSQGHLQRGDYQLLLQYGDFLQQQPELIRLAEQLGRSRSAKAQPAPDARYEPYTVMVRQPDSVPEEVSGIHQSNDILRLLPTELVMLGMSELEFEFYRRLLERRLLTYRLQGDNWQEKTQQRPVSLKQNDEQPRGPFIVCVDTSGSMGGFNEQCAKAFCLALLRIALADNRRCYIMLFATEIIHYELSADNGIEQAIRFLNQHFRGGTDLAACLANTLNKMEDREWYDADAVIISDFIAQRLPEELVRKIKIQQQAHQHRFHAVAMSAYGKPGIMRIFDHIWRFDTSLKSRLIRRWKR</sequence>
<organism>
    <name type="scientific">Yersinia pestis (strain Pestoides F)</name>
    <dbReference type="NCBI Taxonomy" id="386656"/>
    <lineage>
        <taxon>Bacteria</taxon>
        <taxon>Pseudomonadati</taxon>
        <taxon>Pseudomonadota</taxon>
        <taxon>Gammaproteobacteria</taxon>
        <taxon>Enterobacterales</taxon>
        <taxon>Yersiniaceae</taxon>
        <taxon>Yersinia</taxon>
    </lineage>
</organism>
<accession>A4TSI0</accession>
<comment type="function">
    <text evidence="1">Component of the RavA-ViaA chaperone complex, which may act on the membrane to optimize the function of some of the respiratory chains. ViaA stimulates the ATPase activity of RavA.</text>
</comment>
<comment type="subunit">
    <text evidence="1">Homodimer. Interacts with RavA.</text>
</comment>
<comment type="subcellular location">
    <subcellularLocation>
        <location evidence="1">Cytoplasm</location>
    </subcellularLocation>
</comment>
<comment type="similarity">
    <text evidence="1">Belongs to the ViaA family.</text>
</comment>
<protein>
    <recommendedName>
        <fullName evidence="1">Regulatory protein ViaA</fullName>
    </recommendedName>
    <alternativeName>
        <fullName evidence="1">VWA interacting with AAA+ ATPase</fullName>
    </alternativeName>
</protein>
<name>VIAA_YERPP</name>
<gene>
    <name evidence="1" type="primary">viaA</name>
    <name type="ordered locus">YPDSF_3901</name>
</gene>
<reference key="1">
    <citation type="submission" date="2007-02" db="EMBL/GenBank/DDBJ databases">
        <title>Complete sequence of chromosome of Yersinia pestis Pestoides F.</title>
        <authorList>
            <consortium name="US DOE Joint Genome Institute"/>
            <person name="Copeland A."/>
            <person name="Lucas S."/>
            <person name="Lapidus A."/>
            <person name="Barry K."/>
            <person name="Detter J.C."/>
            <person name="Glavina del Rio T."/>
            <person name="Hammon N."/>
            <person name="Israni S."/>
            <person name="Dalin E."/>
            <person name="Tice H."/>
            <person name="Pitluck S."/>
            <person name="Di Bartolo G."/>
            <person name="Chain P."/>
            <person name="Malfatti S."/>
            <person name="Shin M."/>
            <person name="Vergez L."/>
            <person name="Schmutz J."/>
            <person name="Larimer F."/>
            <person name="Land M."/>
            <person name="Hauser L."/>
            <person name="Worsham P."/>
            <person name="Chu M."/>
            <person name="Bearden S."/>
            <person name="Garcia E."/>
            <person name="Richardson P."/>
        </authorList>
    </citation>
    <scope>NUCLEOTIDE SEQUENCE [LARGE SCALE GENOMIC DNA]</scope>
    <source>
        <strain>Pestoides F</strain>
    </source>
</reference>
<evidence type="ECO:0000255" key="1">
    <source>
        <dbReference type="HAMAP-Rule" id="MF_01626"/>
    </source>
</evidence>
<proteinExistence type="inferred from homology"/>
<keyword id="KW-0143">Chaperone</keyword>
<keyword id="KW-0963">Cytoplasm</keyword>
<feature type="chain" id="PRO_1000069615" description="Regulatory protein ViaA">
    <location>
        <begin position="1"/>
        <end position="488"/>
    </location>
</feature>